<accession>B3Q6U2</accession>
<gene>
    <name evidence="1" type="primary">thrB</name>
    <name type="ordered locus">Rpal_4750</name>
</gene>
<protein>
    <recommendedName>
        <fullName evidence="1">Homoserine kinase</fullName>
        <shortName evidence="1">HK</shortName>
        <shortName evidence="1">HSK</shortName>
        <ecNumber evidence="1">2.7.1.39</ecNumber>
    </recommendedName>
</protein>
<organism>
    <name type="scientific">Rhodopseudomonas palustris (strain TIE-1)</name>
    <dbReference type="NCBI Taxonomy" id="395960"/>
    <lineage>
        <taxon>Bacteria</taxon>
        <taxon>Pseudomonadati</taxon>
        <taxon>Pseudomonadota</taxon>
        <taxon>Alphaproteobacteria</taxon>
        <taxon>Hyphomicrobiales</taxon>
        <taxon>Nitrobacteraceae</taxon>
        <taxon>Rhodopseudomonas</taxon>
    </lineage>
</organism>
<keyword id="KW-0028">Amino-acid biosynthesis</keyword>
<keyword id="KW-0067">ATP-binding</keyword>
<keyword id="KW-0418">Kinase</keyword>
<keyword id="KW-0547">Nucleotide-binding</keyword>
<keyword id="KW-0791">Threonine biosynthesis</keyword>
<keyword id="KW-0808">Transferase</keyword>
<sequence length="327" mass="35807">MAVYTDVAADELADFLSRYDIGDLLSYKGIAEGVENSNFLLHTSRGYFILTLYEKRVARDDLPFFLSLMTHLADSGINCPQPVADREGRTLATLAGRPAAIISFLDGVWPRKPSVVHCAGVGQALAKMHLAGRDFAMKRANALSVAGWRPLFAAAEARADEVQPGLRDFLAAELSYLESGVWPSDLPQGLIHADLFPDNVFFIGDDVSGIIDFTFACNDLLAYDVAICLNAWCFEADHAFNVTKARALLSAYTRERPLDAAEQAALPLLARGAALRFLLTRLVDWLNVPEGALVKPKDPMEYVRKLRFQQNVAGIRDYGVEIAGAVA</sequence>
<dbReference type="EC" id="2.7.1.39" evidence="1"/>
<dbReference type="EMBL" id="CP001096">
    <property type="protein sequence ID" value="ACF03241.1"/>
    <property type="molecule type" value="Genomic_DNA"/>
</dbReference>
<dbReference type="RefSeq" id="WP_012497493.1">
    <property type="nucleotide sequence ID" value="NC_011004.1"/>
</dbReference>
<dbReference type="SMR" id="B3Q6U2"/>
<dbReference type="KEGG" id="rpt:Rpal_4750"/>
<dbReference type="HOGENOM" id="CLU_053300_1_0_5"/>
<dbReference type="OrthoDB" id="9777460at2"/>
<dbReference type="UniPathway" id="UPA00050">
    <property type="reaction ID" value="UER00064"/>
</dbReference>
<dbReference type="Proteomes" id="UP000001725">
    <property type="component" value="Chromosome"/>
</dbReference>
<dbReference type="GO" id="GO:0005524">
    <property type="term" value="F:ATP binding"/>
    <property type="evidence" value="ECO:0007669"/>
    <property type="project" value="UniProtKB-KW"/>
</dbReference>
<dbReference type="GO" id="GO:0004413">
    <property type="term" value="F:homoserine kinase activity"/>
    <property type="evidence" value="ECO:0007669"/>
    <property type="project" value="UniProtKB-UniRule"/>
</dbReference>
<dbReference type="GO" id="GO:0009088">
    <property type="term" value="P:threonine biosynthetic process"/>
    <property type="evidence" value="ECO:0007669"/>
    <property type="project" value="UniProtKB-UniRule"/>
</dbReference>
<dbReference type="CDD" id="cd05153">
    <property type="entry name" value="HomoserineK_II"/>
    <property type="match status" value="1"/>
</dbReference>
<dbReference type="FunFam" id="3.90.1200.10:FF:000041">
    <property type="entry name" value="Homoserine kinase"/>
    <property type="match status" value="1"/>
</dbReference>
<dbReference type="Gene3D" id="3.90.1200.10">
    <property type="match status" value="1"/>
</dbReference>
<dbReference type="Gene3D" id="3.30.200.20">
    <property type="entry name" value="Phosphorylase Kinase, domain 1"/>
    <property type="match status" value="1"/>
</dbReference>
<dbReference type="HAMAP" id="MF_00301">
    <property type="entry name" value="Homoser_kinase_2"/>
    <property type="match status" value="1"/>
</dbReference>
<dbReference type="InterPro" id="IPR002575">
    <property type="entry name" value="Aminoglycoside_PTrfase"/>
</dbReference>
<dbReference type="InterPro" id="IPR005280">
    <property type="entry name" value="Homoserine_kinase_II"/>
</dbReference>
<dbReference type="InterPro" id="IPR011009">
    <property type="entry name" value="Kinase-like_dom_sf"/>
</dbReference>
<dbReference type="InterPro" id="IPR050249">
    <property type="entry name" value="Pseudomonas-type_ThrB"/>
</dbReference>
<dbReference type="NCBIfam" id="NF003558">
    <property type="entry name" value="PRK05231.1"/>
    <property type="match status" value="1"/>
</dbReference>
<dbReference type="NCBIfam" id="TIGR00938">
    <property type="entry name" value="thrB_alt"/>
    <property type="match status" value="1"/>
</dbReference>
<dbReference type="PANTHER" id="PTHR21064:SF6">
    <property type="entry name" value="AMINOGLYCOSIDE PHOSPHOTRANSFERASE DOMAIN-CONTAINING PROTEIN"/>
    <property type="match status" value="1"/>
</dbReference>
<dbReference type="PANTHER" id="PTHR21064">
    <property type="entry name" value="AMINOGLYCOSIDE PHOSPHOTRANSFERASE DOMAIN-CONTAINING PROTEIN-RELATED"/>
    <property type="match status" value="1"/>
</dbReference>
<dbReference type="Pfam" id="PF01636">
    <property type="entry name" value="APH"/>
    <property type="match status" value="1"/>
</dbReference>
<dbReference type="SUPFAM" id="SSF56112">
    <property type="entry name" value="Protein kinase-like (PK-like)"/>
    <property type="match status" value="1"/>
</dbReference>
<reference key="1">
    <citation type="submission" date="2008-05" db="EMBL/GenBank/DDBJ databases">
        <title>Complete sequence of Rhodopseudomonas palustris TIE-1.</title>
        <authorList>
            <consortium name="US DOE Joint Genome Institute"/>
            <person name="Lucas S."/>
            <person name="Copeland A."/>
            <person name="Lapidus A."/>
            <person name="Glavina del Rio T."/>
            <person name="Dalin E."/>
            <person name="Tice H."/>
            <person name="Pitluck S."/>
            <person name="Chain P."/>
            <person name="Malfatti S."/>
            <person name="Shin M."/>
            <person name="Vergez L."/>
            <person name="Lang D."/>
            <person name="Schmutz J."/>
            <person name="Larimer F."/>
            <person name="Land M."/>
            <person name="Hauser L."/>
            <person name="Kyrpides N."/>
            <person name="Mikhailova N."/>
            <person name="Emerson D."/>
            <person name="Newman D.K."/>
            <person name="Roden E."/>
            <person name="Richardson P."/>
        </authorList>
    </citation>
    <scope>NUCLEOTIDE SEQUENCE [LARGE SCALE GENOMIC DNA]</scope>
    <source>
        <strain>TIE-1</strain>
    </source>
</reference>
<evidence type="ECO:0000255" key="1">
    <source>
        <dbReference type="HAMAP-Rule" id="MF_00301"/>
    </source>
</evidence>
<comment type="catalytic activity">
    <reaction evidence="1">
        <text>L-homoserine + ATP = O-phospho-L-homoserine + ADP + H(+)</text>
        <dbReference type="Rhea" id="RHEA:13985"/>
        <dbReference type="ChEBI" id="CHEBI:15378"/>
        <dbReference type="ChEBI" id="CHEBI:30616"/>
        <dbReference type="ChEBI" id="CHEBI:57476"/>
        <dbReference type="ChEBI" id="CHEBI:57590"/>
        <dbReference type="ChEBI" id="CHEBI:456216"/>
        <dbReference type="EC" id="2.7.1.39"/>
    </reaction>
</comment>
<comment type="pathway">
    <text evidence="1">Amino-acid biosynthesis; L-threonine biosynthesis; L-threonine from L-aspartate: step 4/5.</text>
</comment>
<comment type="similarity">
    <text evidence="1">Belongs to the pseudomonas-type ThrB family.</text>
</comment>
<feature type="chain" id="PRO_1000115441" description="Homoserine kinase">
    <location>
        <begin position="1"/>
        <end position="327"/>
    </location>
</feature>
<name>KHSE_RHOPT</name>
<proteinExistence type="inferred from homology"/>